<evidence type="ECO:0000250" key="1">
    <source>
        <dbReference type="UniProtKB" id="P08123"/>
    </source>
</evidence>
<evidence type="ECO:0000256" key="2">
    <source>
        <dbReference type="SAM" id="MobiDB-lite"/>
    </source>
</evidence>
<evidence type="ECO:0000269" key="3">
    <source>
    </source>
</evidence>
<evidence type="ECO:0000303" key="4">
    <source>
    </source>
</evidence>
<evidence type="ECO:0000305" key="5"/>
<sequence length="874" mass="78113">SGGFDFSFLPQPPQEKGVGLGPGPMGLMGPRGPPGASGAPGPQGFQGPAGEPGEPGQTGPAGARGPAGPPGKGVVGPQGARGFPGTPGLPGFKGEPGAPGENGTPGQTGARGRVGAPGPAGARGSDGSVGPVGPAGPIGSAGPPGFPGAPGPKGELGPVGNTGPSGPAGPRGEQGLPGSGPVGPPGNPGANGLTGAKGAAGLPGVAGAPGLPGPRGIPGPVGARGLVGEPGPAGSKGESGGKGEPGSAGPQGPPGSSGEEGKRGPSGESGSTGPTGPPGLRGGLPGADGRAGVMGPAGRGASGPAGVRGPSGDTGRPGEPGLMGARGLPGSPGNVGPAGKEGPAGLPGIDGRPGPIGPAGARGEAGNIGFPGPKGHAGLAGNRGEQGPAGPPGFQGLPGPAGTTGEAGKPGERGIPGEFGLPGPAGPRGERGPPGESGAVGPSGAIGSRGPSGPPGPDGNKGEPGVVGAPGTAGPAGSGGLPGERGETGLRGEVGTTGRDGARGAPGAVGAPGPAGATGDRGEAGAAGPAGPAGPRGSPGERGEVGPAGPNGFAGPAGAAGQPGAKGERGTKGPKGENGIVGPTGPVGSAGPAGPNGPAGPAGSRGDGGPPGLTGFPGAAGRTGPPGPSGITGPPGPAGKEGLRGDQGPVGRGETGAGGPPGFTGEKGPSGEPGTAGPPGTAGPQGLLGAPGILGLPGSRGERGLPGVAGAVGEPGPLGIAGPPGARGDGNPGSDGPPGRGAAGAPGPHGTVGPAGKHGNRGEPGPVGSVGPVGALGPRGPSGPQGIRGLQGLPGLAGQHGDQGSPGPVGPAGPRGPAGPSGPAGKDGRTGHPGAVGPAGIRGSQGSQGPSGPAGPPGSGGGYDFGYEGDFYRA</sequence>
<protein>
    <recommendedName>
        <fullName evidence="4">Collagen alpha-2(I) chain</fullName>
    </recommendedName>
    <alternativeName>
        <fullName evidence="1">Alpha-2 type I collagen</fullName>
    </alternativeName>
</protein>
<keyword id="KW-0903">Direct protein sequencing</keyword>
<keyword id="KW-0952">Extinct organism protein</keyword>
<keyword id="KW-0272">Extracellular matrix</keyword>
<keyword id="KW-0325">Glycoprotein</keyword>
<keyword id="KW-0379">Hydroxylation</keyword>
<keyword id="KW-0873">Pyrrolidone carboxylic acid</keyword>
<keyword id="KW-0964">Secreted</keyword>
<organism evidence="4">
    <name type="scientific">Megalonyx jeffersonii</name>
    <name type="common">Jefferson's ground sloth</name>
    <name type="synonym">Megatherium jeffersonii</name>
    <dbReference type="NCBI Taxonomy" id="2576014"/>
    <lineage>
        <taxon>Eukaryota</taxon>
        <taxon>Metazoa</taxon>
        <taxon>Chordata</taxon>
        <taxon>Craniata</taxon>
        <taxon>Vertebrata</taxon>
        <taxon>Euteleostomi</taxon>
        <taxon>Mammalia</taxon>
        <taxon>Eutheria</taxon>
        <taxon>Xenarthra</taxon>
        <taxon>Pilosa</taxon>
        <taxon>Folivora</taxon>
        <taxon>Megalonychidae</taxon>
        <taxon>Megalonyx</taxon>
    </lineage>
</organism>
<dbReference type="GO" id="GO:0031012">
    <property type="term" value="C:extracellular matrix"/>
    <property type="evidence" value="ECO:0007669"/>
    <property type="project" value="TreeGrafter"/>
</dbReference>
<dbReference type="GO" id="GO:0005615">
    <property type="term" value="C:extracellular space"/>
    <property type="evidence" value="ECO:0007669"/>
    <property type="project" value="TreeGrafter"/>
</dbReference>
<dbReference type="InterPro" id="IPR008160">
    <property type="entry name" value="Collagen"/>
</dbReference>
<dbReference type="InterPro" id="IPR050149">
    <property type="entry name" value="Collagen_superfamily"/>
</dbReference>
<dbReference type="PANTHER" id="PTHR24023">
    <property type="entry name" value="COLLAGEN ALPHA"/>
    <property type="match status" value="1"/>
</dbReference>
<dbReference type="PANTHER" id="PTHR24023:SF1082">
    <property type="entry name" value="COLLAGEN TRIPLE HELIX REPEAT"/>
    <property type="match status" value="1"/>
</dbReference>
<dbReference type="Pfam" id="PF01391">
    <property type="entry name" value="Collagen"/>
    <property type="match status" value="8"/>
</dbReference>
<feature type="chain" id="PRO_0000448475" description="Collagen alpha-2(I) chain">
    <location>
        <begin position="1"/>
        <end position="874"/>
    </location>
</feature>
<feature type="region of interest" description="Disordered" evidence="2">
    <location>
        <begin position="1"/>
        <end position="874"/>
    </location>
</feature>
<feature type="compositionally biased region" description="Low complexity" evidence="2">
    <location>
        <begin position="27"/>
        <end position="66"/>
    </location>
</feature>
<feature type="compositionally biased region" description="Low complexity" evidence="2">
    <location>
        <begin position="110"/>
        <end position="143"/>
    </location>
</feature>
<feature type="compositionally biased region" description="Low complexity" evidence="2">
    <location>
        <begin position="188"/>
        <end position="209"/>
    </location>
</feature>
<feature type="compositionally biased region" description="Low complexity" evidence="2">
    <location>
        <begin position="218"/>
        <end position="236"/>
    </location>
</feature>
<feature type="compositionally biased region" description="Gly residues" evidence="2">
    <location>
        <begin position="237"/>
        <end position="246"/>
    </location>
</feature>
<feature type="compositionally biased region" description="Low complexity" evidence="2">
    <location>
        <begin position="247"/>
        <end position="257"/>
    </location>
</feature>
<feature type="compositionally biased region" description="Low complexity" evidence="2">
    <location>
        <begin position="346"/>
        <end position="365"/>
    </location>
</feature>
<feature type="compositionally biased region" description="Low complexity" evidence="2">
    <location>
        <begin position="434"/>
        <end position="451"/>
    </location>
</feature>
<feature type="compositionally biased region" description="Low complexity" evidence="2">
    <location>
        <begin position="463"/>
        <end position="473"/>
    </location>
</feature>
<feature type="compositionally biased region" description="Gly residues" evidence="2">
    <location>
        <begin position="474"/>
        <end position="483"/>
    </location>
</feature>
<feature type="compositionally biased region" description="Low complexity" evidence="2">
    <location>
        <begin position="491"/>
        <end position="538"/>
    </location>
</feature>
<feature type="compositionally biased region" description="Low complexity" evidence="2">
    <location>
        <begin position="545"/>
        <end position="565"/>
    </location>
</feature>
<feature type="compositionally biased region" description="Basic and acidic residues" evidence="2">
    <location>
        <begin position="566"/>
        <end position="575"/>
    </location>
</feature>
<feature type="compositionally biased region" description="Low complexity" evidence="2">
    <location>
        <begin position="583"/>
        <end position="593"/>
    </location>
</feature>
<feature type="compositionally biased region" description="Gly residues" evidence="2">
    <location>
        <begin position="603"/>
        <end position="612"/>
    </location>
</feature>
<feature type="compositionally biased region" description="Low complexity" evidence="2">
    <location>
        <begin position="614"/>
        <end position="623"/>
    </location>
</feature>
<feature type="compositionally biased region" description="Gly residues" evidence="2">
    <location>
        <begin position="648"/>
        <end position="662"/>
    </location>
</feature>
<feature type="compositionally biased region" description="Low complexity" evidence="2">
    <location>
        <begin position="663"/>
        <end position="697"/>
    </location>
</feature>
<feature type="compositionally biased region" description="Low complexity" evidence="2">
    <location>
        <begin position="705"/>
        <end position="724"/>
    </location>
</feature>
<feature type="compositionally biased region" description="Gly residues" evidence="2">
    <location>
        <begin position="725"/>
        <end position="744"/>
    </location>
</feature>
<feature type="compositionally biased region" description="Low complexity" evidence="2">
    <location>
        <begin position="745"/>
        <end position="755"/>
    </location>
</feature>
<feature type="compositionally biased region" description="Low complexity" evidence="2">
    <location>
        <begin position="763"/>
        <end position="778"/>
    </location>
</feature>
<feature type="modified residue" description="4-hydroxyproline" evidence="1">
    <location>
        <position position="10"/>
    </location>
</feature>
<feature type="modified residue" description="4-hydroxyproline" evidence="1">
    <location>
        <position position="13"/>
    </location>
</feature>
<feature type="modified residue" description="Allysine" evidence="1">
    <location>
        <position position="16"/>
    </location>
</feature>
<feature type="modified residue" description="4-hydroxyproline" evidence="1">
    <location>
        <position position="34"/>
    </location>
</feature>
<feature type="modified residue" description="4-hydroxyproline" evidence="1">
    <location>
        <position position="40"/>
    </location>
</feature>
<feature type="modified residue" description="5-hydroxylysine; alternate" evidence="1">
    <location>
        <position position="93"/>
    </location>
</feature>
<feature type="modified residue" description="4-hydroxyproline" evidence="1">
    <location>
        <position position="317"/>
    </location>
</feature>
<feature type="modified residue" description="4-hydroxyproline" evidence="1">
    <location>
        <position position="320"/>
    </location>
</feature>
<feature type="glycosylation site" description="O-linked (Gal...) hydroxylysine; alternate" evidence="1">
    <location>
        <position position="93"/>
    </location>
</feature>
<feature type="unsure residue" description="L or I" evidence="4">
    <location>
        <position position="9"/>
    </location>
</feature>
<feature type="unsure residue" description="L or I" evidence="4">
    <location>
        <position position="20"/>
    </location>
</feature>
<feature type="unsure residue" description="L or I" evidence="4">
    <location>
        <position position="27"/>
    </location>
</feature>
<feature type="unsure residue" description="L or I" evidence="4">
    <location>
        <position position="89"/>
    </location>
</feature>
<feature type="unsure residue" description="I or L" evidence="4">
    <location>
        <position position="138"/>
    </location>
</feature>
<feature type="unsure residue" description="L or I" evidence="4">
    <location>
        <position position="156"/>
    </location>
</feature>
<feature type="unsure residue" description="L or I" evidence="4">
    <location>
        <position position="176"/>
    </location>
</feature>
<feature type="unsure residue" description="L or I" evidence="4">
    <location>
        <position position="193"/>
    </location>
</feature>
<feature type="unsure residue" description="L or I" evidence="4">
    <location>
        <position position="202"/>
    </location>
</feature>
<feature type="unsure residue" description="L or I" evidence="4">
    <location>
        <position position="211"/>
    </location>
</feature>
<feature type="unsure residue" description="I or L" evidence="4">
    <location>
        <position position="217"/>
    </location>
</feature>
<feature type="unsure residue" description="L or I" evidence="4">
    <location>
        <position position="226"/>
    </location>
</feature>
<feature type="unsure residue" description="L or I" evidence="4">
    <location>
        <position position="280"/>
    </location>
</feature>
<feature type="unsure residue" description="L or I" evidence="4">
    <location>
        <position position="284"/>
    </location>
</feature>
<feature type="unsure residue" description="L or I" evidence="4">
    <location>
        <position position="322"/>
    </location>
</feature>
<feature type="unsure residue" description="L or I" evidence="4">
    <location>
        <position position="328"/>
    </location>
</feature>
<feature type="unsure residue" description="L or I" evidence="4">
    <location>
        <position position="346"/>
    </location>
</feature>
<feature type="unsure residue" description="I or L" evidence="4">
    <location>
        <position position="349"/>
    </location>
</feature>
<feature type="unsure residue" description="I or L" evidence="4">
    <location>
        <position position="356"/>
    </location>
</feature>
<feature type="unsure residue" description="I or L" evidence="4">
    <location>
        <position position="368"/>
    </location>
</feature>
<feature type="unsure residue" description="L or I" evidence="4">
    <location>
        <position position="379"/>
    </location>
</feature>
<feature type="unsure residue" description="L or I" evidence="4">
    <location>
        <position position="397"/>
    </location>
</feature>
<feature type="unsure residue" description="I or L" evidence="4">
    <location>
        <position position="415"/>
    </location>
</feature>
<feature type="unsure residue" description="L or I" evidence="4">
    <location>
        <position position="421"/>
    </location>
</feature>
<feature type="unsure residue" description="I or L" evidence="4">
    <location>
        <position position="446"/>
    </location>
</feature>
<feature type="unsure residue" description="L or I" evidence="4">
    <location>
        <position position="481"/>
    </location>
</feature>
<feature type="unsure residue" description="L or I" evidence="4">
    <location>
        <position position="490"/>
    </location>
</feature>
<feature type="unsure residue" description="I or L" evidence="4">
    <location>
        <position position="580"/>
    </location>
</feature>
<feature type="unsure residue" description="L or I" evidence="4">
    <location>
        <position position="613"/>
    </location>
</feature>
<feature type="unsure residue" description="I or L" evidence="4">
    <location>
        <position position="631"/>
    </location>
</feature>
<feature type="unsure residue" description="L or I" evidence="4">
    <location>
        <position position="643"/>
    </location>
</feature>
<feature type="unsure residue" description="L or I" evidence="4">
    <location>
        <position position="687"/>
    </location>
</feature>
<feature type="unsure residue" description="L or I" evidence="4">
    <location>
        <position position="688"/>
    </location>
</feature>
<feature type="unsure residue" description="I or L" evidence="4">
    <location>
        <position position="693"/>
    </location>
</feature>
<feature type="unsure residue" description="L or I" evidence="4">
    <location>
        <position position="694"/>
    </location>
</feature>
<feature type="unsure residue" description="L or I" evidence="4">
    <location>
        <position position="696"/>
    </location>
</feature>
<feature type="unsure residue" description="L or I" evidence="4">
    <location>
        <position position="705"/>
    </location>
</feature>
<feature type="unsure residue" description="L or I" evidence="4">
    <location>
        <position position="718"/>
    </location>
</feature>
<feature type="unsure residue" description="I or L" evidence="4">
    <location>
        <position position="720"/>
    </location>
</feature>
<feature type="unsure residue" description="L or I" evidence="4">
    <location>
        <position position="776"/>
    </location>
</feature>
<feature type="unsure residue" description="I or L" evidence="4">
    <location>
        <position position="787"/>
    </location>
</feature>
<feature type="unsure residue" description="L or I" evidence="4">
    <location>
        <position position="790"/>
    </location>
</feature>
<feature type="unsure residue" description="L or I" evidence="4">
    <location>
        <position position="793"/>
    </location>
</feature>
<feature type="unsure residue" description="L or I" evidence="4">
    <location>
        <position position="796"/>
    </location>
</feature>
<feature type="unsure residue" description="I or L" evidence="4">
    <location>
        <position position="841"/>
    </location>
</feature>
<feature type="non-consecutive residues" evidence="4">
    <location>
        <begin position="16"/>
        <end position="17"/>
    </location>
</feature>
<feature type="non-consecutive residues" evidence="4">
    <location>
        <begin position="72"/>
        <end position="73"/>
    </location>
</feature>
<feature type="non-consecutive residues" evidence="4">
    <location>
        <begin position="93"/>
        <end position="94"/>
    </location>
</feature>
<feature type="non-consecutive residues" evidence="4">
    <location>
        <begin position="111"/>
        <end position="112"/>
    </location>
</feature>
<feature type="non-consecutive residues" evidence="4">
    <location>
        <begin position="178"/>
        <end position="179"/>
    </location>
</feature>
<feature type="non-consecutive residues" evidence="4">
    <location>
        <begin position="223"/>
        <end position="224"/>
    </location>
</feature>
<feature type="non-consecutive residues" evidence="4">
    <location>
        <begin position="282"/>
        <end position="283"/>
    </location>
</feature>
<feature type="non-consecutive residues" evidence="4">
    <location>
        <begin position="298"/>
        <end position="299"/>
    </location>
</feature>
<feature type="non-consecutive residues" evidence="4">
    <location>
        <begin position="374"/>
        <end position="375"/>
    </location>
</feature>
<feature type="non-consecutive residues" evidence="4">
    <location>
        <begin position="383"/>
        <end position="384"/>
    </location>
</feature>
<feature type="non-consecutive residues" evidence="4">
    <location>
        <begin position="485"/>
        <end position="486"/>
    </location>
</feature>
<feature type="non-consecutive residues" evidence="4">
    <location>
        <begin position="637"/>
        <end position="638"/>
    </location>
</feature>
<feature type="non-consecutive residues" evidence="4">
    <location>
        <begin position="644"/>
        <end position="645"/>
    </location>
</feature>
<feature type="non-consecutive residues" evidence="4">
    <location>
        <begin position="652"/>
        <end position="653"/>
    </location>
</feature>
<feature type="non-consecutive residues" evidence="4">
    <location>
        <begin position="728"/>
        <end position="729"/>
    </location>
</feature>
<feature type="non-consecutive residues" evidence="4">
    <location>
        <begin position="740"/>
        <end position="741"/>
    </location>
</feature>
<feature type="non-consecutive residues" evidence="4">
    <location>
        <begin position="788"/>
        <end position="789"/>
    </location>
</feature>
<feature type="non-consecutive residues" evidence="4">
    <location>
        <begin position="858"/>
        <end position="859"/>
    </location>
</feature>
<feature type="non-terminal residue" evidence="4">
    <location>
        <position position="1"/>
    </location>
</feature>
<feature type="non-terminal residue" evidence="4">
    <location>
        <position position="874"/>
    </location>
</feature>
<comment type="function">
    <text evidence="5">Type I collagen is a member of group I collagen (fibrillar forming collagen).</text>
</comment>
<comment type="subunit">
    <text evidence="1">Trimers of one alpha 2(I) and two alpha 1(I) chains. Interacts (via C-terminus) with TMEM131 (via PapD-L domain); the interaction is direct and is involved in assembly and TRAPPIII ER-to-Golgi transport complex-dependent secretion of collagen.</text>
</comment>
<comment type="subcellular location">
    <subcellularLocation>
        <location>Secreted</location>
    </subcellularLocation>
    <subcellularLocation>
        <location>Secreted</location>
        <location>Extracellular space</location>
    </subcellularLocation>
    <subcellularLocation>
        <location evidence="5">Secreted</location>
        <location evidence="5">Extracellular space</location>
        <location evidence="5">Extracellular matrix</location>
    </subcellularLocation>
</comment>
<comment type="tissue specificity">
    <text evidence="3">Expressed in bones.</text>
</comment>
<comment type="PTM">
    <text evidence="1">Prolines at the third position of the tripeptide repeating unit (G-X-Y) are hydroxylated in some or all of the chains.</text>
</comment>
<comment type="miscellaneous">
    <text evidence="3">These protein fragments were extracted from an ancient pelvis bone collected in Newburgh, New York, USA and estimated to be around 11255 years old.</text>
</comment>
<comment type="similarity">
    <text evidence="5">Belongs to the fibrillar collagen family.</text>
</comment>
<reference evidence="5" key="1">
    <citation type="journal article" date="2019" name="Nat. Ecol. Evol.">
        <title>Palaeoproteomics resolves sloth relationships.</title>
        <authorList>
            <person name="Presslee S."/>
            <person name="Slater G.J."/>
            <person name="Pujos F."/>
            <person name="Forasiepi A.M."/>
            <person name="Fischer R."/>
            <person name="Molloy K."/>
            <person name="Mackie M."/>
            <person name="Olsen J.V."/>
            <person name="Kramarz A."/>
            <person name="Taglioretti M."/>
            <person name="Scaglia F."/>
            <person name="Lezcano M."/>
            <person name="Lanata J.L."/>
            <person name="Southon J."/>
            <person name="Feranec R."/>
            <person name="Bloch J."/>
            <person name="Hajduk A."/>
            <person name="Martin F.M."/>
            <person name="Salas Gismondi R."/>
            <person name="Reguero M."/>
            <person name="de Muizon C."/>
            <person name="Greenwood A."/>
            <person name="Chait B.T."/>
            <person name="Penkman K."/>
            <person name="Collins M."/>
            <person name="MacPhee R.D.E."/>
        </authorList>
    </citation>
    <scope>PROTEIN SEQUENCE</scope>
    <scope>TISSUE SPECIFICITY</scope>
    <scope>IDENTIFICATION BY MASS SPECTROMETRY</scope>
    <source>
        <tissue evidence="4">Bone</tissue>
    </source>
</reference>
<proteinExistence type="evidence at protein level"/>
<accession>C0HLJ8</accession>
<name>CO1A2_MEGJE</name>